<name>HEM3_VIBC1</name>
<dbReference type="EC" id="2.5.1.61" evidence="1"/>
<dbReference type="EMBL" id="CP000789">
    <property type="protein sequence ID" value="ABU69342.1"/>
    <property type="molecule type" value="Genomic_DNA"/>
</dbReference>
<dbReference type="RefSeq" id="WP_005430387.1">
    <property type="nucleotide sequence ID" value="NC_022269.1"/>
</dbReference>
<dbReference type="SMR" id="A7MXU9"/>
<dbReference type="GeneID" id="67375799"/>
<dbReference type="KEGG" id="vha:VIBHAR_00314"/>
<dbReference type="PATRIC" id="fig|338187.25.peg.2255"/>
<dbReference type="UniPathway" id="UPA00251">
    <property type="reaction ID" value="UER00319"/>
</dbReference>
<dbReference type="Proteomes" id="UP000008152">
    <property type="component" value="Chromosome I"/>
</dbReference>
<dbReference type="GO" id="GO:0005737">
    <property type="term" value="C:cytoplasm"/>
    <property type="evidence" value="ECO:0007669"/>
    <property type="project" value="TreeGrafter"/>
</dbReference>
<dbReference type="GO" id="GO:0004418">
    <property type="term" value="F:hydroxymethylbilane synthase activity"/>
    <property type="evidence" value="ECO:0007669"/>
    <property type="project" value="UniProtKB-UniRule"/>
</dbReference>
<dbReference type="GO" id="GO:0006782">
    <property type="term" value="P:protoporphyrinogen IX biosynthetic process"/>
    <property type="evidence" value="ECO:0007669"/>
    <property type="project" value="UniProtKB-UniRule"/>
</dbReference>
<dbReference type="CDD" id="cd13646">
    <property type="entry name" value="PBP2_EcHMBS_like"/>
    <property type="match status" value="1"/>
</dbReference>
<dbReference type="FunFam" id="3.30.160.40:FF:000002">
    <property type="entry name" value="Porphobilinogen deaminase"/>
    <property type="match status" value="1"/>
</dbReference>
<dbReference type="FunFam" id="3.40.190.10:FF:000004">
    <property type="entry name" value="Porphobilinogen deaminase"/>
    <property type="match status" value="1"/>
</dbReference>
<dbReference type="FunFam" id="3.40.190.10:FF:000005">
    <property type="entry name" value="Porphobilinogen deaminase"/>
    <property type="match status" value="1"/>
</dbReference>
<dbReference type="Gene3D" id="3.40.190.10">
    <property type="entry name" value="Periplasmic binding protein-like II"/>
    <property type="match status" value="2"/>
</dbReference>
<dbReference type="Gene3D" id="3.30.160.40">
    <property type="entry name" value="Porphobilinogen deaminase, C-terminal domain"/>
    <property type="match status" value="1"/>
</dbReference>
<dbReference type="HAMAP" id="MF_00260">
    <property type="entry name" value="Porphobil_deam"/>
    <property type="match status" value="1"/>
</dbReference>
<dbReference type="InterPro" id="IPR000860">
    <property type="entry name" value="HemC"/>
</dbReference>
<dbReference type="InterPro" id="IPR022419">
    <property type="entry name" value="Porphobilin_deaminase_cofac_BS"/>
</dbReference>
<dbReference type="InterPro" id="IPR022417">
    <property type="entry name" value="Porphobilin_deaminase_N"/>
</dbReference>
<dbReference type="InterPro" id="IPR022418">
    <property type="entry name" value="Porphobilinogen_deaminase_C"/>
</dbReference>
<dbReference type="InterPro" id="IPR036803">
    <property type="entry name" value="Porphobilinogen_deaminase_C_sf"/>
</dbReference>
<dbReference type="NCBIfam" id="TIGR00212">
    <property type="entry name" value="hemC"/>
    <property type="match status" value="1"/>
</dbReference>
<dbReference type="PANTHER" id="PTHR11557">
    <property type="entry name" value="PORPHOBILINOGEN DEAMINASE"/>
    <property type="match status" value="1"/>
</dbReference>
<dbReference type="PANTHER" id="PTHR11557:SF0">
    <property type="entry name" value="PORPHOBILINOGEN DEAMINASE"/>
    <property type="match status" value="1"/>
</dbReference>
<dbReference type="Pfam" id="PF01379">
    <property type="entry name" value="Porphobil_deam"/>
    <property type="match status" value="1"/>
</dbReference>
<dbReference type="Pfam" id="PF03900">
    <property type="entry name" value="Porphobil_deamC"/>
    <property type="match status" value="1"/>
</dbReference>
<dbReference type="PIRSF" id="PIRSF001438">
    <property type="entry name" value="4pyrrol_synth_OHMeBilane_synth"/>
    <property type="match status" value="1"/>
</dbReference>
<dbReference type="PRINTS" id="PR00151">
    <property type="entry name" value="PORPHBDMNASE"/>
</dbReference>
<dbReference type="SUPFAM" id="SSF53850">
    <property type="entry name" value="Periplasmic binding protein-like II"/>
    <property type="match status" value="1"/>
</dbReference>
<dbReference type="SUPFAM" id="SSF54782">
    <property type="entry name" value="Porphobilinogen deaminase (hydroxymethylbilane synthase), C-terminal domain"/>
    <property type="match status" value="1"/>
</dbReference>
<dbReference type="PROSITE" id="PS00533">
    <property type="entry name" value="PORPHOBILINOGEN_DEAM"/>
    <property type="match status" value="1"/>
</dbReference>
<comment type="function">
    <text evidence="1">Tetrapolymerization of the monopyrrole PBG into the hydroxymethylbilane pre-uroporphyrinogen in several discrete steps.</text>
</comment>
<comment type="catalytic activity">
    <reaction evidence="1">
        <text>4 porphobilinogen + H2O = hydroxymethylbilane + 4 NH4(+)</text>
        <dbReference type="Rhea" id="RHEA:13185"/>
        <dbReference type="ChEBI" id="CHEBI:15377"/>
        <dbReference type="ChEBI" id="CHEBI:28938"/>
        <dbReference type="ChEBI" id="CHEBI:57845"/>
        <dbReference type="ChEBI" id="CHEBI:58126"/>
        <dbReference type="EC" id="2.5.1.61"/>
    </reaction>
</comment>
<comment type="cofactor">
    <cofactor evidence="1">
        <name>dipyrromethane</name>
        <dbReference type="ChEBI" id="CHEBI:60342"/>
    </cofactor>
    <text evidence="1">Binds 1 dipyrromethane group covalently.</text>
</comment>
<comment type="pathway">
    <text evidence="1">Porphyrin-containing compound metabolism; protoporphyrin-IX biosynthesis; coproporphyrinogen-III from 5-aminolevulinate: step 2/4.</text>
</comment>
<comment type="subunit">
    <text evidence="1">Monomer.</text>
</comment>
<comment type="miscellaneous">
    <text evidence="1">The porphobilinogen subunits are added to the dipyrromethane group.</text>
</comment>
<comment type="similarity">
    <text evidence="1">Belongs to the HMBS family.</text>
</comment>
<feature type="chain" id="PRO_1000047771" description="Porphobilinogen deaminase">
    <location>
        <begin position="1"/>
        <end position="312"/>
    </location>
</feature>
<feature type="modified residue" description="S-(dipyrrolylmethanemethyl)cysteine" evidence="1">
    <location>
        <position position="243"/>
    </location>
</feature>
<protein>
    <recommendedName>
        <fullName evidence="1">Porphobilinogen deaminase</fullName>
        <shortName evidence="1">PBG</shortName>
        <ecNumber evidence="1">2.5.1.61</ecNumber>
    </recommendedName>
    <alternativeName>
        <fullName evidence="1">Hydroxymethylbilane synthase</fullName>
        <shortName evidence="1">HMBS</shortName>
    </alternativeName>
    <alternativeName>
        <fullName evidence="1">Pre-uroporphyrinogen synthase</fullName>
    </alternativeName>
</protein>
<organism>
    <name type="scientific">Vibrio campbellii (strain ATCC BAA-1116)</name>
    <dbReference type="NCBI Taxonomy" id="2902295"/>
    <lineage>
        <taxon>Bacteria</taxon>
        <taxon>Pseudomonadati</taxon>
        <taxon>Pseudomonadota</taxon>
        <taxon>Gammaproteobacteria</taxon>
        <taxon>Vibrionales</taxon>
        <taxon>Vibrionaceae</taxon>
        <taxon>Vibrio</taxon>
    </lineage>
</organism>
<proteinExistence type="inferred from homology"/>
<accession>A7MXU9</accession>
<reference key="1">
    <citation type="submission" date="2007-08" db="EMBL/GenBank/DDBJ databases">
        <authorList>
            <consortium name="The Vibrio harveyi Genome Sequencing Project"/>
            <person name="Bassler B."/>
            <person name="Clifton S.W."/>
            <person name="Fulton L."/>
            <person name="Delehaunty K."/>
            <person name="Fronick C."/>
            <person name="Harrison M."/>
            <person name="Markivic C."/>
            <person name="Fulton R."/>
            <person name="Tin-Wollam A.-M."/>
            <person name="Shah N."/>
            <person name="Pepin K."/>
            <person name="Nash W."/>
            <person name="Thiruvilangam P."/>
            <person name="Bhonagiri V."/>
            <person name="Waters C."/>
            <person name="Tu K.C."/>
            <person name="Irgon J."/>
            <person name="Wilson R.K."/>
        </authorList>
    </citation>
    <scope>NUCLEOTIDE SEQUENCE [LARGE SCALE GENOMIC DNA]</scope>
    <source>
        <strain>ATCC BAA-1116 / BB120</strain>
    </source>
</reference>
<sequence length="312" mass="34226">MTQSTPIRIATRKSPLALWQAHFVKDALQAAHPGLEVELVTMVTKGDIILDTPLAKVGGKGLFVKELEVAMLEGRADLAVHSMKDVPVDFPEGLGLVTICEREDPRDAFVSNTYNNIDELPQGAVVGTCSLRRQCQLKEYRPDLVIKELRGNVGTRLGKLDAGEYDAIILAAAGLKRLELEERIRSFIEPEQSLPAVGQGAVGIECRVDDERLLKLLEPLNHQDTADRVRCERAMNLTLEGGCQVPIGSYSLLDGDNIWLRALVGEPDGSLIVRGEIRGHRNDAEALGVQLANELLENGARDILTKLYADHE</sequence>
<keyword id="KW-0627">Porphyrin biosynthesis</keyword>
<keyword id="KW-0808">Transferase</keyword>
<gene>
    <name evidence="1" type="primary">hemC</name>
    <name type="ordered locus">VIBHAR_00314</name>
</gene>
<evidence type="ECO:0000255" key="1">
    <source>
        <dbReference type="HAMAP-Rule" id="MF_00260"/>
    </source>
</evidence>